<sequence length="1127" mass="123194">MPKRTDIKSVMVIGSGPIVIGQAAEFDYSGTQACRVLREEGIRVILVNSNPATIMTDPEMADATYIEPIATPILEQIIAKERPDALLPTLGGQTALNAAMALGEAGVLKKYNVELIGASLEAIDRGEDRELFKKVVDEAGAESARSDIAHSIEEVDKIAEKFGYPLVVRPSFTMGGLGSGIAHNEEELHRIAGAGIHYSPTDEVLIEEGIEGWKEFELELMRDRNDNVVVVCPIENVDPVGVHTGDSITVAPCFTLTDREYQKLRDIGIAIIRGVGVDTGGCNIQFAVHPDTGRIIVIEMNPRVSRSSALASKATGFPIAKIATKLALGYTLDEIRNDITQSTPASFEPTIDYVVTKVPRFAFEKFPGADPTLTTSMKSVGEAMALAGNFQESLGKAMRSIDKRHMGFNWDGEKPSAEEVAELLEAIHTPTEHRYLQLMRAIWGGATLEQVFAATKIDPWFLKQIFLINETAMTVREAETLTPRLLKKAKLAGLSDVQVAHLRGLGDEGENTIRELRWTYGLRPVYKTVDTCAAEFDAATPYYYSCYADETELRPREREAVIILGSGPNRIGQGIEFDYTCVHAVQELGKDYDTIMVNCNPETVSTDYDMSDRLYFEPLTFEDVLEIYEAEKKMGPVKGVIVQLGGQTPLSLAARLKAAGVPILGTTPESIDLAENRELFGEVLKKAEMNAPRYGTALSLEEAKEAAHRIGYPVLVRPSYVLGGRGMEIVYDDKQLNKYVDRALAEAKADTVVSGRLPSPLLIDKFLQDAIEIDVDALFDGEELYIGGIMEHVEEAGVHSGDAACTLPPSTLSDDQIRRLREGTYAIAKGCHVQGLINVQYAFMANTLYVIEANPRASRTVPFASKATGVALAKAAARIMAGETIADQRANGLLLPKGDGGDIHPGQQVAVKESVLPFKRFRTPVGKTVDILLGPEMRSTGEVMGFDRDFPHAFAKSQLAAYDGGLPTHGNVFISVNDTDKRQLPLIAVRLEELGFKLWATEGTASVLRRYGIESNIVDKISTRVDTDPEAPVEVHHAAGSVGKNVVQLIEEGKIDMILNTPNSRGSRSDGYSIRAAAIAADLPQFTTITEFQAALLAIEAVKHNDYQIMSIQEHSKQLFELERREF</sequence>
<name>CARB_BIFLO</name>
<proteinExistence type="inferred from homology"/>
<organism>
    <name type="scientific">Bifidobacterium longum (strain NCC 2705)</name>
    <dbReference type="NCBI Taxonomy" id="206672"/>
    <lineage>
        <taxon>Bacteria</taxon>
        <taxon>Bacillati</taxon>
        <taxon>Actinomycetota</taxon>
        <taxon>Actinomycetes</taxon>
        <taxon>Bifidobacteriales</taxon>
        <taxon>Bifidobacteriaceae</taxon>
        <taxon>Bifidobacterium</taxon>
    </lineage>
</organism>
<evidence type="ECO:0000255" key="1">
    <source>
        <dbReference type="HAMAP-Rule" id="MF_01210"/>
    </source>
</evidence>
<feature type="chain" id="PRO_1000066343" description="Carbamoyl phosphate synthase large chain">
    <location>
        <begin position="1"/>
        <end position="1127"/>
    </location>
</feature>
<feature type="domain" description="ATP-grasp 1" evidence="1">
    <location>
        <begin position="133"/>
        <end position="328"/>
    </location>
</feature>
<feature type="domain" description="ATP-grasp 2" evidence="1">
    <location>
        <begin position="681"/>
        <end position="881"/>
    </location>
</feature>
<feature type="domain" description="MGS-like" evidence="1">
    <location>
        <begin position="964"/>
        <end position="1127"/>
    </location>
</feature>
<feature type="region of interest" description="Carboxyphosphate synthetic domain" evidence="1">
    <location>
        <begin position="1"/>
        <end position="402"/>
    </location>
</feature>
<feature type="region of interest" description="Oligomerization domain" evidence="1">
    <location>
        <begin position="403"/>
        <end position="551"/>
    </location>
</feature>
<feature type="region of interest" description="Carbamoyl phosphate synthetic domain" evidence="1">
    <location>
        <begin position="552"/>
        <end position="962"/>
    </location>
</feature>
<feature type="region of interest" description="Allosteric domain" evidence="1">
    <location>
        <begin position="963"/>
        <end position="1127"/>
    </location>
</feature>
<feature type="binding site" evidence="1">
    <location>
        <position position="129"/>
    </location>
    <ligand>
        <name>ATP</name>
        <dbReference type="ChEBI" id="CHEBI:30616"/>
        <label>1</label>
    </ligand>
</feature>
<feature type="binding site" evidence="1">
    <location>
        <position position="169"/>
    </location>
    <ligand>
        <name>ATP</name>
        <dbReference type="ChEBI" id="CHEBI:30616"/>
        <label>1</label>
    </ligand>
</feature>
<feature type="binding site" evidence="1">
    <location>
        <position position="175"/>
    </location>
    <ligand>
        <name>ATP</name>
        <dbReference type="ChEBI" id="CHEBI:30616"/>
        <label>1</label>
    </ligand>
</feature>
<feature type="binding site" evidence="1">
    <location>
        <position position="176"/>
    </location>
    <ligand>
        <name>ATP</name>
        <dbReference type="ChEBI" id="CHEBI:30616"/>
        <label>1</label>
    </ligand>
</feature>
<feature type="binding site" evidence="1">
    <location>
        <position position="208"/>
    </location>
    <ligand>
        <name>ATP</name>
        <dbReference type="ChEBI" id="CHEBI:30616"/>
        <label>1</label>
    </ligand>
</feature>
<feature type="binding site" evidence="1">
    <location>
        <position position="210"/>
    </location>
    <ligand>
        <name>ATP</name>
        <dbReference type="ChEBI" id="CHEBI:30616"/>
        <label>1</label>
    </ligand>
</feature>
<feature type="binding site" evidence="1">
    <location>
        <position position="215"/>
    </location>
    <ligand>
        <name>ATP</name>
        <dbReference type="ChEBI" id="CHEBI:30616"/>
        <label>1</label>
    </ligand>
</feature>
<feature type="binding site" evidence="1">
    <location>
        <position position="241"/>
    </location>
    <ligand>
        <name>ATP</name>
        <dbReference type="ChEBI" id="CHEBI:30616"/>
        <label>1</label>
    </ligand>
</feature>
<feature type="binding site" evidence="1">
    <location>
        <position position="242"/>
    </location>
    <ligand>
        <name>ATP</name>
        <dbReference type="ChEBI" id="CHEBI:30616"/>
        <label>1</label>
    </ligand>
</feature>
<feature type="binding site" evidence="1">
    <location>
        <position position="243"/>
    </location>
    <ligand>
        <name>ATP</name>
        <dbReference type="ChEBI" id="CHEBI:30616"/>
        <label>1</label>
    </ligand>
</feature>
<feature type="binding site" evidence="1">
    <location>
        <position position="285"/>
    </location>
    <ligand>
        <name>ATP</name>
        <dbReference type="ChEBI" id="CHEBI:30616"/>
        <label>1</label>
    </ligand>
</feature>
<feature type="binding site" evidence="1">
    <location>
        <position position="285"/>
    </location>
    <ligand>
        <name>Mg(2+)</name>
        <dbReference type="ChEBI" id="CHEBI:18420"/>
        <label>1</label>
    </ligand>
</feature>
<feature type="binding site" evidence="1">
    <location>
        <position position="285"/>
    </location>
    <ligand>
        <name>Mn(2+)</name>
        <dbReference type="ChEBI" id="CHEBI:29035"/>
        <label>1</label>
    </ligand>
</feature>
<feature type="binding site" evidence="1">
    <location>
        <position position="299"/>
    </location>
    <ligand>
        <name>ATP</name>
        <dbReference type="ChEBI" id="CHEBI:30616"/>
        <label>1</label>
    </ligand>
</feature>
<feature type="binding site" evidence="1">
    <location>
        <position position="299"/>
    </location>
    <ligand>
        <name>Mg(2+)</name>
        <dbReference type="ChEBI" id="CHEBI:18420"/>
        <label>1</label>
    </ligand>
</feature>
<feature type="binding site" evidence="1">
    <location>
        <position position="299"/>
    </location>
    <ligand>
        <name>Mg(2+)</name>
        <dbReference type="ChEBI" id="CHEBI:18420"/>
        <label>2</label>
    </ligand>
</feature>
<feature type="binding site" evidence="1">
    <location>
        <position position="299"/>
    </location>
    <ligand>
        <name>Mn(2+)</name>
        <dbReference type="ChEBI" id="CHEBI:29035"/>
        <label>1</label>
    </ligand>
</feature>
<feature type="binding site" evidence="1">
    <location>
        <position position="299"/>
    </location>
    <ligand>
        <name>Mn(2+)</name>
        <dbReference type="ChEBI" id="CHEBI:29035"/>
        <label>2</label>
    </ligand>
</feature>
<feature type="binding site" evidence="1">
    <location>
        <position position="301"/>
    </location>
    <ligand>
        <name>Mg(2+)</name>
        <dbReference type="ChEBI" id="CHEBI:18420"/>
        <label>2</label>
    </ligand>
</feature>
<feature type="binding site" evidence="1">
    <location>
        <position position="301"/>
    </location>
    <ligand>
        <name>Mn(2+)</name>
        <dbReference type="ChEBI" id="CHEBI:29035"/>
        <label>2</label>
    </ligand>
</feature>
<feature type="binding site" evidence="1">
    <location>
        <position position="717"/>
    </location>
    <ligand>
        <name>ATP</name>
        <dbReference type="ChEBI" id="CHEBI:30616"/>
        <label>2</label>
    </ligand>
</feature>
<feature type="binding site" evidence="1">
    <location>
        <position position="765"/>
    </location>
    <ligand>
        <name>ATP</name>
        <dbReference type="ChEBI" id="CHEBI:30616"/>
        <label>2</label>
    </ligand>
</feature>
<feature type="binding site" evidence="1">
    <location>
        <position position="767"/>
    </location>
    <ligand>
        <name>ATP</name>
        <dbReference type="ChEBI" id="CHEBI:30616"/>
        <label>2</label>
    </ligand>
</feature>
<feature type="binding site" evidence="1">
    <location>
        <position position="772"/>
    </location>
    <ligand>
        <name>ATP</name>
        <dbReference type="ChEBI" id="CHEBI:30616"/>
        <label>2</label>
    </ligand>
</feature>
<feature type="binding site" evidence="1">
    <location>
        <position position="797"/>
    </location>
    <ligand>
        <name>ATP</name>
        <dbReference type="ChEBI" id="CHEBI:30616"/>
        <label>2</label>
    </ligand>
</feature>
<feature type="binding site" evidence="1">
    <location>
        <position position="798"/>
    </location>
    <ligand>
        <name>ATP</name>
        <dbReference type="ChEBI" id="CHEBI:30616"/>
        <label>2</label>
    </ligand>
</feature>
<feature type="binding site" evidence="1">
    <location>
        <position position="799"/>
    </location>
    <ligand>
        <name>ATP</name>
        <dbReference type="ChEBI" id="CHEBI:30616"/>
        <label>2</label>
    </ligand>
</feature>
<feature type="binding site" evidence="1">
    <location>
        <position position="800"/>
    </location>
    <ligand>
        <name>ATP</name>
        <dbReference type="ChEBI" id="CHEBI:30616"/>
        <label>2</label>
    </ligand>
</feature>
<feature type="binding site" evidence="1">
    <location>
        <position position="840"/>
    </location>
    <ligand>
        <name>ATP</name>
        <dbReference type="ChEBI" id="CHEBI:30616"/>
        <label>2</label>
    </ligand>
</feature>
<feature type="binding site" evidence="1">
    <location>
        <position position="840"/>
    </location>
    <ligand>
        <name>Mg(2+)</name>
        <dbReference type="ChEBI" id="CHEBI:18420"/>
        <label>3</label>
    </ligand>
</feature>
<feature type="binding site" evidence="1">
    <location>
        <position position="840"/>
    </location>
    <ligand>
        <name>Mn(2+)</name>
        <dbReference type="ChEBI" id="CHEBI:29035"/>
        <label>3</label>
    </ligand>
</feature>
<feature type="binding site" evidence="1">
    <location>
        <position position="852"/>
    </location>
    <ligand>
        <name>ATP</name>
        <dbReference type="ChEBI" id="CHEBI:30616"/>
        <label>2</label>
    </ligand>
</feature>
<feature type="binding site" evidence="1">
    <location>
        <position position="852"/>
    </location>
    <ligand>
        <name>Mg(2+)</name>
        <dbReference type="ChEBI" id="CHEBI:18420"/>
        <label>3</label>
    </ligand>
</feature>
<feature type="binding site" evidence="1">
    <location>
        <position position="852"/>
    </location>
    <ligand>
        <name>Mg(2+)</name>
        <dbReference type="ChEBI" id="CHEBI:18420"/>
        <label>4</label>
    </ligand>
</feature>
<feature type="binding site" evidence="1">
    <location>
        <position position="852"/>
    </location>
    <ligand>
        <name>Mn(2+)</name>
        <dbReference type="ChEBI" id="CHEBI:29035"/>
        <label>3</label>
    </ligand>
</feature>
<feature type="binding site" evidence="1">
    <location>
        <position position="852"/>
    </location>
    <ligand>
        <name>Mn(2+)</name>
        <dbReference type="ChEBI" id="CHEBI:29035"/>
        <label>4</label>
    </ligand>
</feature>
<feature type="binding site" evidence="1">
    <location>
        <position position="854"/>
    </location>
    <ligand>
        <name>Mg(2+)</name>
        <dbReference type="ChEBI" id="CHEBI:18420"/>
        <label>4</label>
    </ligand>
</feature>
<feature type="binding site" evidence="1">
    <location>
        <position position="854"/>
    </location>
    <ligand>
        <name>Mn(2+)</name>
        <dbReference type="ChEBI" id="CHEBI:29035"/>
        <label>4</label>
    </ligand>
</feature>
<gene>
    <name evidence="1" type="primary">carB</name>
    <name type="ordered locus">BL0068</name>
</gene>
<reference key="1">
    <citation type="journal article" date="2002" name="Proc. Natl. Acad. Sci. U.S.A.">
        <title>The genome sequence of Bifidobacterium longum reflects its adaptation to the human gastrointestinal tract.</title>
        <authorList>
            <person name="Schell M.A."/>
            <person name="Karmirantzou M."/>
            <person name="Snel B."/>
            <person name="Vilanova D."/>
            <person name="Berger B."/>
            <person name="Pessi G."/>
            <person name="Zwahlen M.-C."/>
            <person name="Desiere F."/>
            <person name="Bork P."/>
            <person name="Delley M."/>
            <person name="Pridmore R.D."/>
            <person name="Arigoni F."/>
        </authorList>
    </citation>
    <scope>NUCLEOTIDE SEQUENCE [LARGE SCALE GENOMIC DNA]</scope>
    <source>
        <strain>NCC 2705</strain>
    </source>
</reference>
<accession>Q8G815</accession>
<comment type="function">
    <text evidence="1">Large subunit of the glutamine-dependent carbamoyl phosphate synthetase (CPSase). CPSase catalyzes the formation of carbamoyl phosphate from the ammonia moiety of glutamine, carbonate, and phosphate donated by ATP, constituting the first step of 2 biosynthetic pathways, one leading to arginine and/or urea and the other to pyrimidine nucleotides. The large subunit (synthetase) binds the substrates ammonia (free or transferred from glutamine from the small subunit), hydrogencarbonate and ATP and carries out an ATP-coupled ligase reaction, activating hydrogencarbonate by forming carboxy phosphate which reacts with ammonia to form carbamoyl phosphate.</text>
</comment>
<comment type="catalytic activity">
    <reaction evidence="1">
        <text>hydrogencarbonate + L-glutamine + 2 ATP + H2O = carbamoyl phosphate + L-glutamate + 2 ADP + phosphate + 2 H(+)</text>
        <dbReference type="Rhea" id="RHEA:18633"/>
        <dbReference type="ChEBI" id="CHEBI:15377"/>
        <dbReference type="ChEBI" id="CHEBI:15378"/>
        <dbReference type="ChEBI" id="CHEBI:17544"/>
        <dbReference type="ChEBI" id="CHEBI:29985"/>
        <dbReference type="ChEBI" id="CHEBI:30616"/>
        <dbReference type="ChEBI" id="CHEBI:43474"/>
        <dbReference type="ChEBI" id="CHEBI:58228"/>
        <dbReference type="ChEBI" id="CHEBI:58359"/>
        <dbReference type="ChEBI" id="CHEBI:456216"/>
        <dbReference type="EC" id="6.3.5.5"/>
    </reaction>
</comment>
<comment type="catalytic activity">
    <molecule>Carbamoyl phosphate synthase large chain</molecule>
    <reaction evidence="1">
        <text>hydrogencarbonate + NH4(+) + 2 ATP = carbamoyl phosphate + 2 ADP + phosphate + 2 H(+)</text>
        <dbReference type="Rhea" id="RHEA:18029"/>
        <dbReference type="ChEBI" id="CHEBI:15378"/>
        <dbReference type="ChEBI" id="CHEBI:17544"/>
        <dbReference type="ChEBI" id="CHEBI:28938"/>
        <dbReference type="ChEBI" id="CHEBI:30616"/>
        <dbReference type="ChEBI" id="CHEBI:43474"/>
        <dbReference type="ChEBI" id="CHEBI:58228"/>
        <dbReference type="ChEBI" id="CHEBI:456216"/>
        <dbReference type="EC" id="6.3.4.16"/>
    </reaction>
</comment>
<comment type="cofactor">
    <cofactor evidence="1">
        <name>Mg(2+)</name>
        <dbReference type="ChEBI" id="CHEBI:18420"/>
    </cofactor>
    <cofactor evidence="1">
        <name>Mn(2+)</name>
        <dbReference type="ChEBI" id="CHEBI:29035"/>
    </cofactor>
    <text evidence="1">Binds 4 Mg(2+) or Mn(2+) ions per subunit.</text>
</comment>
<comment type="pathway">
    <text evidence="1">Amino-acid biosynthesis; L-arginine biosynthesis; carbamoyl phosphate from bicarbonate: step 1/1.</text>
</comment>
<comment type="pathway">
    <text evidence="1">Pyrimidine metabolism; UMP biosynthesis via de novo pathway; (S)-dihydroorotate from bicarbonate: step 1/3.</text>
</comment>
<comment type="subunit">
    <text evidence="1">Composed of two chains; the small (or glutamine) chain promotes the hydrolysis of glutamine to ammonia, which is used by the large (or ammonia) chain to synthesize carbamoyl phosphate. Tetramer of heterodimers (alpha,beta)4.</text>
</comment>
<comment type="domain">
    <text evidence="1">The large subunit is composed of 2 ATP-grasp domains that are involved in binding the 2 ATP molecules needed for carbamoyl phosphate synthesis. The N-terminal ATP-grasp domain (referred to as the carboxyphosphate synthetic component) catalyzes the ATP-dependent phosphorylation of hydrogencarbonate to carboxyphosphate and the subsequent nucleophilic attack by ammonia to form a carbamate intermediate. The C-terminal ATP-grasp domain (referred to as the carbamoyl phosphate synthetic component) then catalyzes the phosphorylation of carbamate with the second ATP to form the end product carbamoyl phosphate. The reactive and unstable enzyme intermediates are sequentially channeled from one active site to the next through the interior of the protein over a distance of at least 96 A.</text>
</comment>
<comment type="similarity">
    <text evidence="1">Belongs to the CarB family.</text>
</comment>
<protein>
    <recommendedName>
        <fullName evidence="1">Carbamoyl phosphate synthase large chain</fullName>
        <ecNumber evidence="1">6.3.4.16</ecNumber>
        <ecNumber evidence="1">6.3.5.5</ecNumber>
    </recommendedName>
    <alternativeName>
        <fullName evidence="1">Carbamoyl phosphate synthetase ammonia chain</fullName>
    </alternativeName>
</protein>
<dbReference type="EC" id="6.3.4.16" evidence="1"/>
<dbReference type="EC" id="6.3.5.5" evidence="1"/>
<dbReference type="EMBL" id="AE014295">
    <property type="protein sequence ID" value="AAN23934.1"/>
    <property type="molecule type" value="Genomic_DNA"/>
</dbReference>
<dbReference type="RefSeq" id="NP_695298.1">
    <property type="nucleotide sequence ID" value="NC_004307.2"/>
</dbReference>
<dbReference type="RefSeq" id="WP_007056239.1">
    <property type="nucleotide sequence ID" value="NC_004307.2"/>
</dbReference>
<dbReference type="SMR" id="Q8G815"/>
<dbReference type="STRING" id="206672.BL0068"/>
<dbReference type="EnsemblBacteria" id="AAN23934">
    <property type="protein sequence ID" value="AAN23934"/>
    <property type="gene ID" value="BL0068"/>
</dbReference>
<dbReference type="KEGG" id="blo:BL0068"/>
<dbReference type="PATRIC" id="fig|206672.9.peg.74"/>
<dbReference type="HOGENOM" id="CLU_000513_1_0_11"/>
<dbReference type="OrthoDB" id="9804197at2"/>
<dbReference type="PhylomeDB" id="Q8G815"/>
<dbReference type="UniPathway" id="UPA00068">
    <property type="reaction ID" value="UER00171"/>
</dbReference>
<dbReference type="UniPathway" id="UPA00070">
    <property type="reaction ID" value="UER00115"/>
</dbReference>
<dbReference type="Proteomes" id="UP000000439">
    <property type="component" value="Chromosome"/>
</dbReference>
<dbReference type="GO" id="GO:0005737">
    <property type="term" value="C:cytoplasm"/>
    <property type="evidence" value="ECO:0007669"/>
    <property type="project" value="TreeGrafter"/>
</dbReference>
<dbReference type="GO" id="GO:0005524">
    <property type="term" value="F:ATP binding"/>
    <property type="evidence" value="ECO:0007669"/>
    <property type="project" value="UniProtKB-UniRule"/>
</dbReference>
<dbReference type="GO" id="GO:0004087">
    <property type="term" value="F:carbamoyl-phosphate synthase (ammonia) activity"/>
    <property type="evidence" value="ECO:0007669"/>
    <property type="project" value="RHEA"/>
</dbReference>
<dbReference type="GO" id="GO:0004088">
    <property type="term" value="F:carbamoyl-phosphate synthase (glutamine-hydrolyzing) activity"/>
    <property type="evidence" value="ECO:0007669"/>
    <property type="project" value="UniProtKB-UniRule"/>
</dbReference>
<dbReference type="GO" id="GO:0046872">
    <property type="term" value="F:metal ion binding"/>
    <property type="evidence" value="ECO:0007669"/>
    <property type="project" value="UniProtKB-KW"/>
</dbReference>
<dbReference type="GO" id="GO:0044205">
    <property type="term" value="P:'de novo' UMP biosynthetic process"/>
    <property type="evidence" value="ECO:0007669"/>
    <property type="project" value="UniProtKB-UniRule"/>
</dbReference>
<dbReference type="GO" id="GO:0006541">
    <property type="term" value="P:glutamine metabolic process"/>
    <property type="evidence" value="ECO:0007669"/>
    <property type="project" value="TreeGrafter"/>
</dbReference>
<dbReference type="GO" id="GO:0006526">
    <property type="term" value="P:L-arginine biosynthetic process"/>
    <property type="evidence" value="ECO:0007669"/>
    <property type="project" value="UniProtKB-UniRule"/>
</dbReference>
<dbReference type="CDD" id="cd01424">
    <property type="entry name" value="MGS_CPS_II"/>
    <property type="match status" value="1"/>
</dbReference>
<dbReference type="FunFam" id="1.10.1030.10:FF:000002">
    <property type="entry name" value="Carbamoyl-phosphate synthase large chain"/>
    <property type="match status" value="1"/>
</dbReference>
<dbReference type="FunFam" id="3.30.470.20:FF:000007">
    <property type="entry name" value="Carbamoyl-phosphate synthase large chain"/>
    <property type="match status" value="1"/>
</dbReference>
<dbReference type="FunFam" id="3.30.470.20:FF:000014">
    <property type="entry name" value="Carbamoyl-phosphate synthase large chain"/>
    <property type="match status" value="1"/>
</dbReference>
<dbReference type="FunFam" id="3.40.50.20:FF:000001">
    <property type="entry name" value="Carbamoyl-phosphate synthase large chain"/>
    <property type="match status" value="1"/>
</dbReference>
<dbReference type="FunFam" id="3.40.50.20:FF:000002">
    <property type="entry name" value="Carbamoyl-phosphate synthase large chain"/>
    <property type="match status" value="1"/>
</dbReference>
<dbReference type="Gene3D" id="3.40.50.20">
    <property type="match status" value="2"/>
</dbReference>
<dbReference type="Gene3D" id="3.30.1490.20">
    <property type="entry name" value="ATP-grasp fold, A domain"/>
    <property type="match status" value="1"/>
</dbReference>
<dbReference type="Gene3D" id="3.30.470.20">
    <property type="entry name" value="ATP-grasp fold, B domain"/>
    <property type="match status" value="2"/>
</dbReference>
<dbReference type="Gene3D" id="1.10.1030.10">
    <property type="entry name" value="Carbamoyl-phosphate synthetase, large subunit oligomerisation domain"/>
    <property type="match status" value="1"/>
</dbReference>
<dbReference type="Gene3D" id="3.40.50.1380">
    <property type="entry name" value="Methylglyoxal synthase-like domain"/>
    <property type="match status" value="1"/>
</dbReference>
<dbReference type="HAMAP" id="MF_01210_B">
    <property type="entry name" value="CPSase_L_chain_B"/>
    <property type="match status" value="1"/>
</dbReference>
<dbReference type="InterPro" id="IPR011761">
    <property type="entry name" value="ATP-grasp"/>
</dbReference>
<dbReference type="InterPro" id="IPR013815">
    <property type="entry name" value="ATP_grasp_subdomain_1"/>
</dbReference>
<dbReference type="InterPro" id="IPR006275">
    <property type="entry name" value="CarbamoylP_synth_lsu"/>
</dbReference>
<dbReference type="InterPro" id="IPR005480">
    <property type="entry name" value="CarbamoylP_synth_lsu_oligo"/>
</dbReference>
<dbReference type="InterPro" id="IPR036897">
    <property type="entry name" value="CarbamoylP_synth_lsu_oligo_sf"/>
</dbReference>
<dbReference type="InterPro" id="IPR005479">
    <property type="entry name" value="CbamoylP_synth_lsu-like_ATP-bd"/>
</dbReference>
<dbReference type="InterPro" id="IPR005483">
    <property type="entry name" value="CbamoylP_synth_lsu_CPSase_dom"/>
</dbReference>
<dbReference type="InterPro" id="IPR011607">
    <property type="entry name" value="MGS-like_dom"/>
</dbReference>
<dbReference type="InterPro" id="IPR036914">
    <property type="entry name" value="MGS-like_dom_sf"/>
</dbReference>
<dbReference type="InterPro" id="IPR033937">
    <property type="entry name" value="MGS_CPS_CarB"/>
</dbReference>
<dbReference type="InterPro" id="IPR016185">
    <property type="entry name" value="PreATP-grasp_dom_sf"/>
</dbReference>
<dbReference type="NCBIfam" id="TIGR01369">
    <property type="entry name" value="CPSaseII_lrg"/>
    <property type="match status" value="1"/>
</dbReference>
<dbReference type="NCBIfam" id="NF003671">
    <property type="entry name" value="PRK05294.1"/>
    <property type="match status" value="1"/>
</dbReference>
<dbReference type="NCBIfam" id="NF009455">
    <property type="entry name" value="PRK12815.1"/>
    <property type="match status" value="1"/>
</dbReference>
<dbReference type="PANTHER" id="PTHR11405:SF53">
    <property type="entry name" value="CARBAMOYL-PHOSPHATE SYNTHASE [AMMONIA], MITOCHONDRIAL"/>
    <property type="match status" value="1"/>
</dbReference>
<dbReference type="PANTHER" id="PTHR11405">
    <property type="entry name" value="CARBAMOYLTRANSFERASE FAMILY MEMBER"/>
    <property type="match status" value="1"/>
</dbReference>
<dbReference type="Pfam" id="PF02786">
    <property type="entry name" value="CPSase_L_D2"/>
    <property type="match status" value="2"/>
</dbReference>
<dbReference type="Pfam" id="PF02787">
    <property type="entry name" value="CPSase_L_D3"/>
    <property type="match status" value="1"/>
</dbReference>
<dbReference type="Pfam" id="PF02142">
    <property type="entry name" value="MGS"/>
    <property type="match status" value="1"/>
</dbReference>
<dbReference type="PRINTS" id="PR00098">
    <property type="entry name" value="CPSASE"/>
</dbReference>
<dbReference type="SMART" id="SM01096">
    <property type="entry name" value="CPSase_L_D3"/>
    <property type="match status" value="1"/>
</dbReference>
<dbReference type="SMART" id="SM00851">
    <property type="entry name" value="MGS"/>
    <property type="match status" value="1"/>
</dbReference>
<dbReference type="SUPFAM" id="SSF48108">
    <property type="entry name" value="Carbamoyl phosphate synthetase, large subunit connection domain"/>
    <property type="match status" value="1"/>
</dbReference>
<dbReference type="SUPFAM" id="SSF56059">
    <property type="entry name" value="Glutathione synthetase ATP-binding domain-like"/>
    <property type="match status" value="2"/>
</dbReference>
<dbReference type="SUPFAM" id="SSF52335">
    <property type="entry name" value="Methylglyoxal synthase-like"/>
    <property type="match status" value="1"/>
</dbReference>
<dbReference type="SUPFAM" id="SSF52440">
    <property type="entry name" value="PreATP-grasp domain"/>
    <property type="match status" value="2"/>
</dbReference>
<dbReference type="PROSITE" id="PS50975">
    <property type="entry name" value="ATP_GRASP"/>
    <property type="match status" value="2"/>
</dbReference>
<dbReference type="PROSITE" id="PS00866">
    <property type="entry name" value="CPSASE_1"/>
    <property type="match status" value="2"/>
</dbReference>
<dbReference type="PROSITE" id="PS00867">
    <property type="entry name" value="CPSASE_2"/>
    <property type="match status" value="2"/>
</dbReference>
<dbReference type="PROSITE" id="PS51855">
    <property type="entry name" value="MGS"/>
    <property type="match status" value="1"/>
</dbReference>
<keyword id="KW-0028">Amino-acid biosynthesis</keyword>
<keyword id="KW-0055">Arginine biosynthesis</keyword>
<keyword id="KW-0067">ATP-binding</keyword>
<keyword id="KW-0436">Ligase</keyword>
<keyword id="KW-0460">Magnesium</keyword>
<keyword id="KW-0464">Manganese</keyword>
<keyword id="KW-0479">Metal-binding</keyword>
<keyword id="KW-0547">Nucleotide-binding</keyword>
<keyword id="KW-0665">Pyrimidine biosynthesis</keyword>
<keyword id="KW-1185">Reference proteome</keyword>
<keyword id="KW-0677">Repeat</keyword>